<accession>A2RE30</accession>
<protein>
    <recommendedName>
        <fullName evidence="1">GTPase Obg</fullName>
        <ecNumber evidence="1">3.6.5.-</ecNumber>
    </recommendedName>
    <alternativeName>
        <fullName evidence="1">GTP-binding protein Obg</fullName>
    </alternativeName>
</protein>
<organism>
    <name type="scientific">Streptococcus pyogenes serotype M5 (strain Manfredo)</name>
    <dbReference type="NCBI Taxonomy" id="160491"/>
    <lineage>
        <taxon>Bacteria</taxon>
        <taxon>Bacillati</taxon>
        <taxon>Bacillota</taxon>
        <taxon>Bacilli</taxon>
        <taxon>Lactobacillales</taxon>
        <taxon>Streptococcaceae</taxon>
        <taxon>Streptococcus</taxon>
    </lineage>
</organism>
<comment type="function">
    <text evidence="1">An essential GTPase which binds GTP, GDP and possibly (p)ppGpp with moderate affinity, with high nucleotide exchange rates and a fairly low GTP hydrolysis rate. Plays a role in control of the cell cycle, stress response, ribosome biogenesis and in those bacteria that undergo differentiation, in morphogenesis control.</text>
</comment>
<comment type="cofactor">
    <cofactor evidence="1">
        <name>Mg(2+)</name>
        <dbReference type="ChEBI" id="CHEBI:18420"/>
    </cofactor>
</comment>
<comment type="subunit">
    <text evidence="1">Monomer.</text>
</comment>
<comment type="subcellular location">
    <subcellularLocation>
        <location evidence="1">Cytoplasm</location>
    </subcellularLocation>
</comment>
<comment type="similarity">
    <text evidence="1">Belongs to the TRAFAC class OBG-HflX-like GTPase superfamily. OBG GTPase family.</text>
</comment>
<name>OBG_STRPG</name>
<feature type="chain" id="PRO_0000386313" description="GTPase Obg">
    <location>
        <begin position="1"/>
        <end position="437"/>
    </location>
</feature>
<feature type="domain" description="Obg" evidence="3">
    <location>
        <begin position="2"/>
        <end position="160"/>
    </location>
</feature>
<feature type="domain" description="OBG-type G" evidence="1">
    <location>
        <begin position="161"/>
        <end position="338"/>
    </location>
</feature>
<feature type="domain" description="OCT" evidence="2">
    <location>
        <begin position="359"/>
        <end position="437"/>
    </location>
</feature>
<feature type="binding site" evidence="1">
    <location>
        <begin position="167"/>
        <end position="174"/>
    </location>
    <ligand>
        <name>GTP</name>
        <dbReference type="ChEBI" id="CHEBI:37565"/>
    </ligand>
</feature>
<feature type="binding site" evidence="1">
    <location>
        <position position="174"/>
    </location>
    <ligand>
        <name>Mg(2+)</name>
        <dbReference type="ChEBI" id="CHEBI:18420"/>
    </ligand>
</feature>
<feature type="binding site" evidence="1">
    <location>
        <begin position="192"/>
        <end position="196"/>
    </location>
    <ligand>
        <name>GTP</name>
        <dbReference type="ChEBI" id="CHEBI:37565"/>
    </ligand>
</feature>
<feature type="binding site" evidence="1">
    <location>
        <position position="194"/>
    </location>
    <ligand>
        <name>Mg(2+)</name>
        <dbReference type="ChEBI" id="CHEBI:18420"/>
    </ligand>
</feature>
<feature type="binding site" evidence="1">
    <location>
        <begin position="214"/>
        <end position="217"/>
    </location>
    <ligand>
        <name>GTP</name>
        <dbReference type="ChEBI" id="CHEBI:37565"/>
    </ligand>
</feature>
<feature type="binding site" evidence="1">
    <location>
        <begin position="284"/>
        <end position="287"/>
    </location>
    <ligand>
        <name>GTP</name>
        <dbReference type="ChEBI" id="CHEBI:37565"/>
    </ligand>
</feature>
<feature type="binding site" evidence="1">
    <location>
        <begin position="319"/>
        <end position="321"/>
    </location>
    <ligand>
        <name>GTP</name>
        <dbReference type="ChEBI" id="CHEBI:37565"/>
    </ligand>
</feature>
<keyword id="KW-0963">Cytoplasm</keyword>
<keyword id="KW-0342">GTP-binding</keyword>
<keyword id="KW-0378">Hydrolase</keyword>
<keyword id="KW-0460">Magnesium</keyword>
<keyword id="KW-0479">Metal-binding</keyword>
<keyword id="KW-0547">Nucleotide-binding</keyword>
<sequence length="437" mass="48349">MSMFLDTAKISVQAGRGGDGMVAFRREKYVPNGGPWGGDGGKGGSVIFRVDEGLRTLMDFRYNRKFKAKSGEKGMTKGMHGRGAEDLIVFVPQGTTVRDAETGKVITDLVEHGQEVVIAKGGRGGRGNIRFATPRNPAPEIAENGEPGEERQLELELKILADVGLVGFPSVGKSTLLSVVSSAKPKIGAYHFTTIVPNLGMVRTKSGDSFAMADLPGLIEGASQGIGLGTQFLRHIERTRVILHVIDMSASEGRDPYEDYVSINNELETYNLRLMERPQIIVANKMDMPEAQENLKAFKKKLAAQYDEFDDLPMIFPISSLAHQGLENLLEATAELLAKTDEFLLYDEADLVDEEAYYGFAETEKDFEITRDDDATWVLSGEKLERLFVMTNMERDESIMKFARQLRGMGVDEALRERGAKDGDPVRIGKFEFEFVD</sequence>
<proteinExistence type="inferred from homology"/>
<gene>
    <name evidence="1" type="primary">obg</name>
    <name type="ordered locus">SpyM50777</name>
</gene>
<dbReference type="EC" id="3.6.5.-" evidence="1"/>
<dbReference type="EMBL" id="AM295007">
    <property type="protein sequence ID" value="CAM30105.1"/>
    <property type="molecule type" value="Genomic_DNA"/>
</dbReference>
<dbReference type="RefSeq" id="WP_011888818.1">
    <property type="nucleotide sequence ID" value="NC_009332.1"/>
</dbReference>
<dbReference type="SMR" id="A2RE30"/>
<dbReference type="KEGG" id="spf:SpyM50777"/>
<dbReference type="HOGENOM" id="CLU_011747_2_1_9"/>
<dbReference type="GO" id="GO:0005737">
    <property type="term" value="C:cytoplasm"/>
    <property type="evidence" value="ECO:0007669"/>
    <property type="project" value="UniProtKB-SubCell"/>
</dbReference>
<dbReference type="GO" id="GO:0005525">
    <property type="term" value="F:GTP binding"/>
    <property type="evidence" value="ECO:0007669"/>
    <property type="project" value="UniProtKB-UniRule"/>
</dbReference>
<dbReference type="GO" id="GO:0003924">
    <property type="term" value="F:GTPase activity"/>
    <property type="evidence" value="ECO:0007669"/>
    <property type="project" value="UniProtKB-UniRule"/>
</dbReference>
<dbReference type="GO" id="GO:0000287">
    <property type="term" value="F:magnesium ion binding"/>
    <property type="evidence" value="ECO:0007669"/>
    <property type="project" value="InterPro"/>
</dbReference>
<dbReference type="GO" id="GO:0042254">
    <property type="term" value="P:ribosome biogenesis"/>
    <property type="evidence" value="ECO:0007669"/>
    <property type="project" value="UniProtKB-UniRule"/>
</dbReference>
<dbReference type="CDD" id="cd01898">
    <property type="entry name" value="Obg"/>
    <property type="match status" value="1"/>
</dbReference>
<dbReference type="FunFam" id="2.70.210.12:FF:000001">
    <property type="entry name" value="GTPase Obg"/>
    <property type="match status" value="1"/>
</dbReference>
<dbReference type="FunFam" id="3.40.50.300:FF:000515">
    <property type="entry name" value="GTPase Obg"/>
    <property type="match status" value="1"/>
</dbReference>
<dbReference type="Gene3D" id="3.30.300.350">
    <property type="entry name" value="GTP-binding protein OBG, C-terminal domain"/>
    <property type="match status" value="1"/>
</dbReference>
<dbReference type="Gene3D" id="2.70.210.12">
    <property type="entry name" value="GTP1/OBG domain"/>
    <property type="match status" value="1"/>
</dbReference>
<dbReference type="Gene3D" id="3.40.50.300">
    <property type="entry name" value="P-loop containing nucleotide triphosphate hydrolases"/>
    <property type="match status" value="1"/>
</dbReference>
<dbReference type="HAMAP" id="MF_01454">
    <property type="entry name" value="GTPase_Obg"/>
    <property type="match status" value="1"/>
</dbReference>
<dbReference type="InterPro" id="IPR031167">
    <property type="entry name" value="G_OBG"/>
</dbReference>
<dbReference type="InterPro" id="IPR006073">
    <property type="entry name" value="GTP-bd"/>
</dbReference>
<dbReference type="InterPro" id="IPR014100">
    <property type="entry name" value="GTP-bd_Obg/CgtA"/>
</dbReference>
<dbReference type="InterPro" id="IPR036346">
    <property type="entry name" value="GTP-bd_prot_GTP1/OBG_C_sf"/>
</dbReference>
<dbReference type="InterPro" id="IPR006074">
    <property type="entry name" value="GTP1-OBG_CS"/>
</dbReference>
<dbReference type="InterPro" id="IPR006169">
    <property type="entry name" value="GTP1_OBG_dom"/>
</dbReference>
<dbReference type="InterPro" id="IPR036726">
    <property type="entry name" value="GTP1_OBG_dom_sf"/>
</dbReference>
<dbReference type="InterPro" id="IPR045086">
    <property type="entry name" value="OBG_GTPase"/>
</dbReference>
<dbReference type="InterPro" id="IPR015349">
    <property type="entry name" value="OCT_dom"/>
</dbReference>
<dbReference type="InterPro" id="IPR027417">
    <property type="entry name" value="P-loop_NTPase"/>
</dbReference>
<dbReference type="InterPro" id="IPR005225">
    <property type="entry name" value="Small_GTP-bd"/>
</dbReference>
<dbReference type="NCBIfam" id="TIGR02729">
    <property type="entry name" value="Obg_CgtA"/>
    <property type="match status" value="1"/>
</dbReference>
<dbReference type="NCBIfam" id="TIGR03595">
    <property type="entry name" value="Obg_CgtA_exten"/>
    <property type="match status" value="1"/>
</dbReference>
<dbReference type="NCBIfam" id="NF008954">
    <property type="entry name" value="PRK12296.1"/>
    <property type="match status" value="1"/>
</dbReference>
<dbReference type="NCBIfam" id="NF008955">
    <property type="entry name" value="PRK12297.1"/>
    <property type="match status" value="1"/>
</dbReference>
<dbReference type="NCBIfam" id="NF008956">
    <property type="entry name" value="PRK12299.1"/>
    <property type="match status" value="1"/>
</dbReference>
<dbReference type="NCBIfam" id="TIGR00231">
    <property type="entry name" value="small_GTP"/>
    <property type="match status" value="1"/>
</dbReference>
<dbReference type="PANTHER" id="PTHR11702">
    <property type="entry name" value="DEVELOPMENTALLY REGULATED GTP-BINDING PROTEIN-RELATED"/>
    <property type="match status" value="1"/>
</dbReference>
<dbReference type="PANTHER" id="PTHR11702:SF31">
    <property type="entry name" value="MITOCHONDRIAL RIBOSOME-ASSOCIATED GTPASE 2"/>
    <property type="match status" value="1"/>
</dbReference>
<dbReference type="Pfam" id="PF09269">
    <property type="entry name" value="DUF1967"/>
    <property type="match status" value="1"/>
</dbReference>
<dbReference type="Pfam" id="PF01018">
    <property type="entry name" value="GTP1_OBG"/>
    <property type="match status" value="1"/>
</dbReference>
<dbReference type="Pfam" id="PF01926">
    <property type="entry name" value="MMR_HSR1"/>
    <property type="match status" value="1"/>
</dbReference>
<dbReference type="PIRSF" id="PIRSF002401">
    <property type="entry name" value="GTP_bd_Obg/CgtA"/>
    <property type="match status" value="1"/>
</dbReference>
<dbReference type="PRINTS" id="PR00326">
    <property type="entry name" value="GTP1OBG"/>
</dbReference>
<dbReference type="SUPFAM" id="SSF102741">
    <property type="entry name" value="Obg GTP-binding protein C-terminal domain"/>
    <property type="match status" value="1"/>
</dbReference>
<dbReference type="SUPFAM" id="SSF82051">
    <property type="entry name" value="Obg GTP-binding protein N-terminal domain"/>
    <property type="match status" value="1"/>
</dbReference>
<dbReference type="SUPFAM" id="SSF52540">
    <property type="entry name" value="P-loop containing nucleoside triphosphate hydrolases"/>
    <property type="match status" value="1"/>
</dbReference>
<dbReference type="PROSITE" id="PS51710">
    <property type="entry name" value="G_OBG"/>
    <property type="match status" value="1"/>
</dbReference>
<dbReference type="PROSITE" id="PS00905">
    <property type="entry name" value="GTP1_OBG"/>
    <property type="match status" value="1"/>
</dbReference>
<dbReference type="PROSITE" id="PS51883">
    <property type="entry name" value="OBG"/>
    <property type="match status" value="1"/>
</dbReference>
<dbReference type="PROSITE" id="PS51881">
    <property type="entry name" value="OCT"/>
    <property type="match status" value="1"/>
</dbReference>
<reference key="1">
    <citation type="journal article" date="2007" name="J. Bacteriol.">
        <title>Complete genome of acute rheumatic fever-associated serotype M5 Streptococcus pyogenes strain Manfredo.</title>
        <authorList>
            <person name="Holden M.T.G."/>
            <person name="Scott A."/>
            <person name="Cherevach I."/>
            <person name="Chillingworth T."/>
            <person name="Churcher C."/>
            <person name="Cronin A."/>
            <person name="Dowd L."/>
            <person name="Feltwell T."/>
            <person name="Hamlin N."/>
            <person name="Holroyd S."/>
            <person name="Jagels K."/>
            <person name="Moule S."/>
            <person name="Mungall K."/>
            <person name="Quail M.A."/>
            <person name="Price C."/>
            <person name="Rabbinowitsch E."/>
            <person name="Sharp S."/>
            <person name="Skelton J."/>
            <person name="Whitehead S."/>
            <person name="Barrell B.G."/>
            <person name="Kehoe M."/>
            <person name="Parkhill J."/>
        </authorList>
    </citation>
    <scope>NUCLEOTIDE SEQUENCE [LARGE SCALE GENOMIC DNA]</scope>
    <source>
        <strain>Manfredo</strain>
    </source>
</reference>
<evidence type="ECO:0000255" key="1">
    <source>
        <dbReference type="HAMAP-Rule" id="MF_01454"/>
    </source>
</evidence>
<evidence type="ECO:0000255" key="2">
    <source>
        <dbReference type="PROSITE-ProRule" id="PRU01229"/>
    </source>
</evidence>
<evidence type="ECO:0000255" key="3">
    <source>
        <dbReference type="PROSITE-ProRule" id="PRU01231"/>
    </source>
</evidence>